<dbReference type="EMBL" id="AE016815">
    <property type="protein sequence ID" value="AAS50871.1"/>
    <property type="molecule type" value="Genomic_DNA"/>
</dbReference>
<dbReference type="RefSeq" id="NP_983047.1">
    <property type="nucleotide sequence ID" value="NM_208400.2"/>
</dbReference>
<dbReference type="SMR" id="Q75DC6"/>
<dbReference type="FunCoup" id="Q75DC6">
    <property type="interactions" value="264"/>
</dbReference>
<dbReference type="STRING" id="284811.Q75DC6"/>
<dbReference type="EnsemblFungi" id="AAS50871">
    <property type="protein sequence ID" value="AAS50871"/>
    <property type="gene ID" value="AGOS_ABR100W"/>
</dbReference>
<dbReference type="GeneID" id="4619151"/>
<dbReference type="KEGG" id="ago:AGOS_ABR100W"/>
<dbReference type="eggNOG" id="KOG3004">
    <property type="taxonomic scope" value="Eukaryota"/>
</dbReference>
<dbReference type="HOGENOM" id="CLU_068300_0_0_1"/>
<dbReference type="InParanoid" id="Q75DC6"/>
<dbReference type="OMA" id="EWEMNDI"/>
<dbReference type="OrthoDB" id="437078at2759"/>
<dbReference type="Proteomes" id="UP000000591">
    <property type="component" value="Chromosome II"/>
</dbReference>
<dbReference type="GO" id="GO:0031298">
    <property type="term" value="C:replication fork protection complex"/>
    <property type="evidence" value="ECO:0000318"/>
    <property type="project" value="GO_Central"/>
</dbReference>
<dbReference type="GO" id="GO:0003677">
    <property type="term" value="F:DNA binding"/>
    <property type="evidence" value="ECO:0000318"/>
    <property type="project" value="GO_Central"/>
</dbReference>
<dbReference type="GO" id="GO:0006281">
    <property type="term" value="P:DNA repair"/>
    <property type="evidence" value="ECO:0007669"/>
    <property type="project" value="UniProtKB-KW"/>
</dbReference>
<dbReference type="GO" id="GO:0000076">
    <property type="term" value="P:DNA replication checkpoint signaling"/>
    <property type="evidence" value="ECO:0000318"/>
    <property type="project" value="GO_Central"/>
</dbReference>
<dbReference type="GO" id="GO:0034087">
    <property type="term" value="P:establishment of mitotic sister chromatid cohesion"/>
    <property type="evidence" value="ECO:0007669"/>
    <property type="project" value="EnsemblFungi"/>
</dbReference>
<dbReference type="GO" id="GO:0043570">
    <property type="term" value="P:maintenance of DNA repeat elements"/>
    <property type="evidence" value="ECO:0007669"/>
    <property type="project" value="EnsemblFungi"/>
</dbReference>
<dbReference type="GO" id="GO:0045132">
    <property type="term" value="P:meiotic chromosome segregation"/>
    <property type="evidence" value="ECO:0007669"/>
    <property type="project" value="EnsemblFungi"/>
</dbReference>
<dbReference type="GO" id="GO:0043111">
    <property type="term" value="P:replication fork arrest"/>
    <property type="evidence" value="ECO:0000318"/>
    <property type="project" value="GO_Central"/>
</dbReference>
<dbReference type="GO" id="GO:0031297">
    <property type="term" value="P:replication fork processing"/>
    <property type="evidence" value="ECO:0007669"/>
    <property type="project" value="InterPro"/>
</dbReference>
<dbReference type="InterPro" id="IPR012923">
    <property type="entry name" value="Csm3"/>
</dbReference>
<dbReference type="InterPro" id="IPR040038">
    <property type="entry name" value="TIPIN/Csm3/Swi3"/>
</dbReference>
<dbReference type="PANTHER" id="PTHR13220">
    <property type="entry name" value="TIMELESS INTERACTING-RELATED"/>
    <property type="match status" value="1"/>
</dbReference>
<dbReference type="PANTHER" id="PTHR13220:SF11">
    <property type="entry name" value="TIMELESS-INTERACTING PROTEIN"/>
    <property type="match status" value="1"/>
</dbReference>
<dbReference type="Pfam" id="PF07962">
    <property type="entry name" value="Swi3"/>
    <property type="match status" value="1"/>
</dbReference>
<reference key="1">
    <citation type="journal article" date="2004" name="Science">
        <title>The Ashbya gossypii genome as a tool for mapping the ancient Saccharomyces cerevisiae genome.</title>
        <authorList>
            <person name="Dietrich F.S."/>
            <person name="Voegeli S."/>
            <person name="Brachat S."/>
            <person name="Lerch A."/>
            <person name="Gates K."/>
            <person name="Steiner S."/>
            <person name="Mohr C."/>
            <person name="Poehlmann R."/>
            <person name="Luedi P."/>
            <person name="Choi S."/>
            <person name="Wing R.A."/>
            <person name="Flavier A."/>
            <person name="Gaffney T.D."/>
            <person name="Philippsen P."/>
        </authorList>
    </citation>
    <scope>NUCLEOTIDE SEQUENCE [LARGE SCALE GENOMIC DNA]</scope>
    <source>
        <strain>ATCC 10895 / CBS 109.51 / FGSC 9923 / NRRL Y-1056</strain>
    </source>
</reference>
<reference key="2">
    <citation type="journal article" date="2013" name="G3 (Bethesda)">
        <title>Genomes of Ashbya fungi isolated from insects reveal four mating-type loci, numerous translocations, lack of transposons, and distinct gene duplications.</title>
        <authorList>
            <person name="Dietrich F.S."/>
            <person name="Voegeli S."/>
            <person name="Kuo S."/>
            <person name="Philippsen P."/>
        </authorList>
    </citation>
    <scope>GENOME REANNOTATION</scope>
    <source>
        <strain>ATCC 10895 / CBS 109.51 / FGSC 9923 / NRRL Y-1056</strain>
    </source>
</reference>
<protein>
    <recommendedName>
        <fullName>Chromosome segregation in meiosis protein 3</fullName>
    </recommendedName>
</protein>
<sequence>MSSVGPLEDEAAGTELGGSPADPATLTEIDPSAIQVRKTRTVVKLDCERLVSKKGLPYLLKNAPKHARISKRRDTYGNLCHVLQFYQLWAHELYPKAKFKDFVALCDRLGKTDRQLRAYRMQLIREELGLAAEGLDPPPQPLREHTGAGGSQPAGSVAQDTNTNADLSDDDLLYTTSRAAAASSTANPVPRSETPAALAGVDEAELLAQLAEMQRAAEEDVHESEDDEQLALMREMDEFM</sequence>
<evidence type="ECO:0000250" key="1"/>
<evidence type="ECO:0000256" key="2">
    <source>
        <dbReference type="SAM" id="MobiDB-lite"/>
    </source>
</evidence>
<evidence type="ECO:0000305" key="3"/>
<feature type="chain" id="PRO_0000301710" description="Chromosome segregation in meiosis protein 3">
    <location>
        <begin position="1"/>
        <end position="240"/>
    </location>
</feature>
<feature type="region of interest" description="Disordered" evidence="2">
    <location>
        <begin position="1"/>
        <end position="28"/>
    </location>
</feature>
<feature type="region of interest" description="Disordered" evidence="2">
    <location>
        <begin position="132"/>
        <end position="169"/>
    </location>
</feature>
<feature type="region of interest" description="Disordered" evidence="2">
    <location>
        <begin position="213"/>
        <end position="240"/>
    </location>
</feature>
<feature type="compositionally biased region" description="Acidic residues" evidence="2">
    <location>
        <begin position="220"/>
        <end position="229"/>
    </location>
</feature>
<gene>
    <name type="primary">CSM3</name>
    <name type="ordered locus">ABR100W</name>
</gene>
<accession>Q75DC6</accession>
<name>CSM3_EREGS</name>
<organism>
    <name type="scientific">Eremothecium gossypii (strain ATCC 10895 / CBS 109.51 / FGSC 9923 / NRRL Y-1056)</name>
    <name type="common">Yeast</name>
    <name type="synonym">Ashbya gossypii</name>
    <dbReference type="NCBI Taxonomy" id="284811"/>
    <lineage>
        <taxon>Eukaryota</taxon>
        <taxon>Fungi</taxon>
        <taxon>Dikarya</taxon>
        <taxon>Ascomycota</taxon>
        <taxon>Saccharomycotina</taxon>
        <taxon>Saccharomycetes</taxon>
        <taxon>Saccharomycetales</taxon>
        <taxon>Saccharomycetaceae</taxon>
        <taxon>Eremothecium</taxon>
    </lineage>
</organism>
<proteinExistence type="inferred from homology"/>
<keyword id="KW-0131">Cell cycle</keyword>
<keyword id="KW-0227">DNA damage</keyword>
<keyword id="KW-0234">DNA repair</keyword>
<keyword id="KW-0236">DNA replication inhibitor</keyword>
<keyword id="KW-0469">Meiosis</keyword>
<keyword id="KW-0539">Nucleus</keyword>
<keyword id="KW-1185">Reference proteome</keyword>
<comment type="function">
    <text evidence="1">Forms a fork protection complex (FPC) with TOF1 and which is required for chromosome segregation during meiosis and DNA damage repair. FPC coordinates leading and lagging strand synthesis and moves with the replication fork. FPC stabilizes replication forks in a configuration that is recognized by replication checkpoint sensors (By similarity).</text>
</comment>
<comment type="subunit">
    <text evidence="1">Component of the fork protection complex (FPC) consisting of TOF1 and CSM3.</text>
</comment>
<comment type="subcellular location">
    <subcellularLocation>
        <location evidence="1">Nucleus</location>
    </subcellularLocation>
</comment>
<comment type="similarity">
    <text evidence="3">Belongs to the CSM3 family.</text>
</comment>